<feature type="chain" id="PRO_1000026116" description="ATP-dependent Clp protease proteolytic subunit">
    <location>
        <begin position="1"/>
        <end position="216"/>
    </location>
</feature>
<feature type="active site" description="Nucleophile" evidence="1">
    <location>
        <position position="120"/>
    </location>
</feature>
<feature type="active site" evidence="1">
    <location>
        <position position="145"/>
    </location>
</feature>
<reference key="1">
    <citation type="journal article" date="2006" name="Nat. Biotechnol.">
        <title>Genome sequence of the bioplastic-producing 'Knallgas' bacterium Ralstonia eutropha H16.</title>
        <authorList>
            <person name="Pohlmann A."/>
            <person name="Fricke W.F."/>
            <person name="Reinecke F."/>
            <person name="Kusian B."/>
            <person name="Liesegang H."/>
            <person name="Cramm R."/>
            <person name="Eitinger T."/>
            <person name="Ewering C."/>
            <person name="Poetter M."/>
            <person name="Schwartz E."/>
            <person name="Strittmatter A."/>
            <person name="Voss I."/>
            <person name="Gottschalk G."/>
            <person name="Steinbuechel A."/>
            <person name="Friedrich B."/>
            <person name="Bowien B."/>
        </authorList>
    </citation>
    <scope>NUCLEOTIDE SEQUENCE [LARGE SCALE GENOMIC DNA]</scope>
    <source>
        <strain>ATCC 17699 / DSM 428 / KCTC 22496 / NCIMB 10442 / H16 / Stanier 337</strain>
    </source>
</reference>
<comment type="function">
    <text evidence="1">Cleaves peptides in various proteins in a process that requires ATP hydrolysis. Has a chymotrypsin-like activity. Plays a major role in the degradation of misfolded proteins.</text>
</comment>
<comment type="catalytic activity">
    <reaction evidence="1">
        <text>Hydrolysis of proteins to small peptides in the presence of ATP and magnesium. alpha-casein is the usual test substrate. In the absence of ATP, only oligopeptides shorter than five residues are hydrolyzed (such as succinyl-Leu-Tyr-|-NHMec, and Leu-Tyr-Leu-|-Tyr-Trp, in which cleavage of the -Tyr-|-Leu- and -Tyr-|-Trp bonds also occurs).</text>
        <dbReference type="EC" id="3.4.21.92"/>
    </reaction>
</comment>
<comment type="subunit">
    <text evidence="1">Fourteen ClpP subunits assemble into 2 heptameric rings which stack back to back to give a disk-like structure with a central cavity, resembling the structure of eukaryotic proteasomes.</text>
</comment>
<comment type="subcellular location">
    <subcellularLocation>
        <location evidence="1">Cytoplasm</location>
    </subcellularLocation>
</comment>
<comment type="similarity">
    <text evidence="1">Belongs to the peptidase S14 family.</text>
</comment>
<accession>Q0KBK4</accession>
<sequence length="216" mass="23495">MTRNDLLDRLATTQASALETQGLGLVPMVVEQSGRGERAYDIYSRLLKERVVFMVGEVNDQTANLVVAQLLFLESENPDKDVSLYINSPGGSVSAGLAIYDTMQFIKPDVSTLCMGMAASMGAFLLAAGAKGKRSALPNSRIMIHQPLGGARGQASDIEIQAREILYLRERLNTILSEVTGQPVEKIARDTDRDNFMSGDQAVDYGLIDKVLARRG</sequence>
<gene>
    <name evidence="1" type="primary">clpP</name>
    <name type="ordered locus">H16_A1483</name>
</gene>
<proteinExistence type="inferred from homology"/>
<dbReference type="EC" id="3.4.21.92" evidence="1"/>
<dbReference type="EMBL" id="AM260479">
    <property type="protein sequence ID" value="CAJ92617.1"/>
    <property type="molecule type" value="Genomic_DNA"/>
</dbReference>
<dbReference type="RefSeq" id="WP_011615108.1">
    <property type="nucleotide sequence ID" value="NZ_CP039287.1"/>
</dbReference>
<dbReference type="SMR" id="Q0KBK4"/>
<dbReference type="STRING" id="381666.H16_A1483"/>
<dbReference type="MEROPS" id="S14.001"/>
<dbReference type="GeneID" id="34308303"/>
<dbReference type="KEGG" id="reh:H16_A1483"/>
<dbReference type="eggNOG" id="COG0740">
    <property type="taxonomic scope" value="Bacteria"/>
</dbReference>
<dbReference type="HOGENOM" id="CLU_058707_3_2_4"/>
<dbReference type="OrthoDB" id="9802800at2"/>
<dbReference type="Proteomes" id="UP000008210">
    <property type="component" value="Chromosome 1"/>
</dbReference>
<dbReference type="GO" id="GO:0005737">
    <property type="term" value="C:cytoplasm"/>
    <property type="evidence" value="ECO:0007669"/>
    <property type="project" value="UniProtKB-SubCell"/>
</dbReference>
<dbReference type="GO" id="GO:0009368">
    <property type="term" value="C:endopeptidase Clp complex"/>
    <property type="evidence" value="ECO:0007669"/>
    <property type="project" value="TreeGrafter"/>
</dbReference>
<dbReference type="GO" id="GO:0004176">
    <property type="term" value="F:ATP-dependent peptidase activity"/>
    <property type="evidence" value="ECO:0007669"/>
    <property type="project" value="InterPro"/>
</dbReference>
<dbReference type="GO" id="GO:0051117">
    <property type="term" value="F:ATPase binding"/>
    <property type="evidence" value="ECO:0007669"/>
    <property type="project" value="TreeGrafter"/>
</dbReference>
<dbReference type="GO" id="GO:0004252">
    <property type="term" value="F:serine-type endopeptidase activity"/>
    <property type="evidence" value="ECO:0007669"/>
    <property type="project" value="UniProtKB-UniRule"/>
</dbReference>
<dbReference type="GO" id="GO:0006515">
    <property type="term" value="P:protein quality control for misfolded or incompletely synthesized proteins"/>
    <property type="evidence" value="ECO:0007669"/>
    <property type="project" value="TreeGrafter"/>
</dbReference>
<dbReference type="CDD" id="cd07017">
    <property type="entry name" value="S14_ClpP_2"/>
    <property type="match status" value="1"/>
</dbReference>
<dbReference type="FunFam" id="3.90.226.10:FF:000001">
    <property type="entry name" value="ATP-dependent Clp protease proteolytic subunit"/>
    <property type="match status" value="1"/>
</dbReference>
<dbReference type="Gene3D" id="3.90.226.10">
    <property type="entry name" value="2-enoyl-CoA Hydratase, Chain A, domain 1"/>
    <property type="match status" value="1"/>
</dbReference>
<dbReference type="HAMAP" id="MF_00444">
    <property type="entry name" value="ClpP"/>
    <property type="match status" value="1"/>
</dbReference>
<dbReference type="InterPro" id="IPR001907">
    <property type="entry name" value="ClpP"/>
</dbReference>
<dbReference type="InterPro" id="IPR029045">
    <property type="entry name" value="ClpP/crotonase-like_dom_sf"/>
</dbReference>
<dbReference type="InterPro" id="IPR023562">
    <property type="entry name" value="ClpP/TepA"/>
</dbReference>
<dbReference type="InterPro" id="IPR033135">
    <property type="entry name" value="ClpP_His_AS"/>
</dbReference>
<dbReference type="InterPro" id="IPR018215">
    <property type="entry name" value="ClpP_Ser_AS"/>
</dbReference>
<dbReference type="NCBIfam" id="TIGR00493">
    <property type="entry name" value="clpP"/>
    <property type="match status" value="1"/>
</dbReference>
<dbReference type="NCBIfam" id="NF001368">
    <property type="entry name" value="PRK00277.1"/>
    <property type="match status" value="1"/>
</dbReference>
<dbReference type="NCBIfam" id="NF009205">
    <property type="entry name" value="PRK12553.1"/>
    <property type="match status" value="1"/>
</dbReference>
<dbReference type="PANTHER" id="PTHR10381">
    <property type="entry name" value="ATP-DEPENDENT CLP PROTEASE PROTEOLYTIC SUBUNIT"/>
    <property type="match status" value="1"/>
</dbReference>
<dbReference type="PANTHER" id="PTHR10381:SF70">
    <property type="entry name" value="ATP-DEPENDENT CLP PROTEASE PROTEOLYTIC SUBUNIT"/>
    <property type="match status" value="1"/>
</dbReference>
<dbReference type="Pfam" id="PF00574">
    <property type="entry name" value="CLP_protease"/>
    <property type="match status" value="1"/>
</dbReference>
<dbReference type="PRINTS" id="PR00127">
    <property type="entry name" value="CLPPROTEASEP"/>
</dbReference>
<dbReference type="SUPFAM" id="SSF52096">
    <property type="entry name" value="ClpP/crotonase"/>
    <property type="match status" value="1"/>
</dbReference>
<dbReference type="PROSITE" id="PS00382">
    <property type="entry name" value="CLP_PROTEASE_HIS"/>
    <property type="match status" value="1"/>
</dbReference>
<dbReference type="PROSITE" id="PS00381">
    <property type="entry name" value="CLP_PROTEASE_SER"/>
    <property type="match status" value="1"/>
</dbReference>
<organism>
    <name type="scientific">Cupriavidus necator (strain ATCC 17699 / DSM 428 / KCTC 22496 / NCIMB 10442 / H16 / Stanier 337)</name>
    <name type="common">Ralstonia eutropha</name>
    <dbReference type="NCBI Taxonomy" id="381666"/>
    <lineage>
        <taxon>Bacteria</taxon>
        <taxon>Pseudomonadati</taxon>
        <taxon>Pseudomonadota</taxon>
        <taxon>Betaproteobacteria</taxon>
        <taxon>Burkholderiales</taxon>
        <taxon>Burkholderiaceae</taxon>
        <taxon>Cupriavidus</taxon>
    </lineage>
</organism>
<name>CLPP_CUPNH</name>
<keyword id="KW-0963">Cytoplasm</keyword>
<keyword id="KW-0378">Hydrolase</keyword>
<keyword id="KW-0645">Protease</keyword>
<keyword id="KW-1185">Reference proteome</keyword>
<keyword id="KW-0720">Serine protease</keyword>
<evidence type="ECO:0000255" key="1">
    <source>
        <dbReference type="HAMAP-Rule" id="MF_00444"/>
    </source>
</evidence>
<protein>
    <recommendedName>
        <fullName evidence="1">ATP-dependent Clp protease proteolytic subunit</fullName>
        <ecNumber evidence="1">3.4.21.92</ecNumber>
    </recommendedName>
    <alternativeName>
        <fullName evidence="1">Endopeptidase Clp</fullName>
    </alternativeName>
</protein>